<gene>
    <name type="primary">folE</name>
    <name type="ordered locus">aq_239</name>
</gene>
<dbReference type="EC" id="3.5.4.16"/>
<dbReference type="EMBL" id="AE000657">
    <property type="protein sequence ID" value="AAC06566.1"/>
    <property type="molecule type" value="Genomic_DNA"/>
</dbReference>
<dbReference type="PIR" id="G70321">
    <property type="entry name" value="G70321"/>
</dbReference>
<dbReference type="RefSeq" id="NP_213163.1">
    <property type="nucleotide sequence ID" value="NC_000918.1"/>
</dbReference>
<dbReference type="RefSeq" id="WP_010880101.1">
    <property type="nucleotide sequence ID" value="NC_000918.1"/>
</dbReference>
<dbReference type="SMR" id="O66603"/>
<dbReference type="FunCoup" id="O66603">
    <property type="interactions" value="372"/>
</dbReference>
<dbReference type="STRING" id="224324.aq_239"/>
<dbReference type="EnsemblBacteria" id="AAC06566">
    <property type="protein sequence ID" value="AAC06566"/>
    <property type="gene ID" value="aq_239"/>
</dbReference>
<dbReference type="KEGG" id="aae:aq_239"/>
<dbReference type="PATRIC" id="fig|224324.8.peg.195"/>
<dbReference type="eggNOG" id="COG0302">
    <property type="taxonomic scope" value="Bacteria"/>
</dbReference>
<dbReference type="HOGENOM" id="CLU_049768_3_1_0"/>
<dbReference type="InParanoid" id="O66603"/>
<dbReference type="OrthoDB" id="9801207at2"/>
<dbReference type="UniPathway" id="UPA00848">
    <property type="reaction ID" value="UER00151"/>
</dbReference>
<dbReference type="Proteomes" id="UP000000798">
    <property type="component" value="Chromosome"/>
</dbReference>
<dbReference type="GO" id="GO:0005737">
    <property type="term" value="C:cytoplasm"/>
    <property type="evidence" value="ECO:0000318"/>
    <property type="project" value="GO_Central"/>
</dbReference>
<dbReference type="GO" id="GO:0005525">
    <property type="term" value="F:GTP binding"/>
    <property type="evidence" value="ECO:0000318"/>
    <property type="project" value="GO_Central"/>
</dbReference>
<dbReference type="GO" id="GO:0003934">
    <property type="term" value="F:GTP cyclohydrolase I activity"/>
    <property type="evidence" value="ECO:0000318"/>
    <property type="project" value="GO_Central"/>
</dbReference>
<dbReference type="GO" id="GO:0008270">
    <property type="term" value="F:zinc ion binding"/>
    <property type="evidence" value="ECO:0000318"/>
    <property type="project" value="GO_Central"/>
</dbReference>
<dbReference type="GO" id="GO:0006730">
    <property type="term" value="P:one-carbon metabolic process"/>
    <property type="evidence" value="ECO:0007669"/>
    <property type="project" value="UniProtKB-UniRule"/>
</dbReference>
<dbReference type="GO" id="GO:0006729">
    <property type="term" value="P:tetrahydrobiopterin biosynthetic process"/>
    <property type="evidence" value="ECO:0000318"/>
    <property type="project" value="GO_Central"/>
</dbReference>
<dbReference type="GO" id="GO:0046654">
    <property type="term" value="P:tetrahydrofolate biosynthetic process"/>
    <property type="evidence" value="ECO:0007669"/>
    <property type="project" value="UniProtKB-UniRule"/>
</dbReference>
<dbReference type="FunFam" id="1.10.286.10:FF:000012">
    <property type="match status" value="1"/>
</dbReference>
<dbReference type="FunFam" id="3.30.1130.10:FF:000001">
    <property type="entry name" value="GTP cyclohydrolase 1"/>
    <property type="match status" value="1"/>
</dbReference>
<dbReference type="Gene3D" id="1.10.286.10">
    <property type="match status" value="1"/>
</dbReference>
<dbReference type="Gene3D" id="3.30.1130.10">
    <property type="match status" value="1"/>
</dbReference>
<dbReference type="HAMAP" id="MF_00223">
    <property type="entry name" value="FolE"/>
    <property type="match status" value="1"/>
</dbReference>
<dbReference type="InterPro" id="IPR043133">
    <property type="entry name" value="GTP-CH-I_C/QueF"/>
</dbReference>
<dbReference type="InterPro" id="IPR043134">
    <property type="entry name" value="GTP-CH-I_N"/>
</dbReference>
<dbReference type="InterPro" id="IPR001474">
    <property type="entry name" value="GTP_CycHdrlase_I"/>
</dbReference>
<dbReference type="InterPro" id="IPR018234">
    <property type="entry name" value="GTP_CycHdrlase_I_CS"/>
</dbReference>
<dbReference type="InterPro" id="IPR020602">
    <property type="entry name" value="GTP_CycHdrlase_I_dom"/>
</dbReference>
<dbReference type="NCBIfam" id="TIGR00063">
    <property type="entry name" value="folE"/>
    <property type="match status" value="1"/>
</dbReference>
<dbReference type="NCBIfam" id="NF006825">
    <property type="entry name" value="PRK09347.1-2"/>
    <property type="match status" value="1"/>
</dbReference>
<dbReference type="NCBIfam" id="NF006826">
    <property type="entry name" value="PRK09347.1-3"/>
    <property type="match status" value="1"/>
</dbReference>
<dbReference type="PANTHER" id="PTHR11109:SF7">
    <property type="entry name" value="GTP CYCLOHYDROLASE 1"/>
    <property type="match status" value="1"/>
</dbReference>
<dbReference type="PANTHER" id="PTHR11109">
    <property type="entry name" value="GTP CYCLOHYDROLASE I"/>
    <property type="match status" value="1"/>
</dbReference>
<dbReference type="Pfam" id="PF01227">
    <property type="entry name" value="GTP_cyclohydroI"/>
    <property type="match status" value="1"/>
</dbReference>
<dbReference type="SUPFAM" id="SSF55620">
    <property type="entry name" value="Tetrahydrobiopterin biosynthesis enzymes-like"/>
    <property type="match status" value="1"/>
</dbReference>
<dbReference type="PROSITE" id="PS00859">
    <property type="entry name" value="GTP_CYCLOHYDROL_1_1"/>
    <property type="match status" value="1"/>
</dbReference>
<dbReference type="PROSITE" id="PS00860">
    <property type="entry name" value="GTP_CYCLOHYDROL_1_2"/>
    <property type="match status" value="1"/>
</dbReference>
<organism>
    <name type="scientific">Aquifex aeolicus (strain VF5)</name>
    <dbReference type="NCBI Taxonomy" id="224324"/>
    <lineage>
        <taxon>Bacteria</taxon>
        <taxon>Pseudomonadati</taxon>
        <taxon>Aquificota</taxon>
        <taxon>Aquificia</taxon>
        <taxon>Aquificales</taxon>
        <taxon>Aquificaceae</taxon>
        <taxon>Aquifex</taxon>
    </lineage>
</organism>
<keyword id="KW-0342">GTP-binding</keyword>
<keyword id="KW-0378">Hydrolase</keyword>
<keyword id="KW-0479">Metal-binding</keyword>
<keyword id="KW-0547">Nucleotide-binding</keyword>
<keyword id="KW-0554">One-carbon metabolism</keyword>
<keyword id="KW-1185">Reference proteome</keyword>
<keyword id="KW-0862">Zinc</keyword>
<name>GCH1_AQUAE</name>
<protein>
    <recommendedName>
        <fullName>GTP cyclohydrolase 1</fullName>
        <ecNumber>3.5.4.16</ecNumber>
    </recommendedName>
    <alternativeName>
        <fullName>GTP cyclohydrolase I</fullName>
        <shortName>GTP-CH-I</shortName>
    </alternativeName>
</protein>
<accession>O66603</accession>
<comment type="catalytic activity">
    <reaction>
        <text>GTP + H2O = 7,8-dihydroneopterin 3'-triphosphate + formate + H(+)</text>
        <dbReference type="Rhea" id="RHEA:17473"/>
        <dbReference type="ChEBI" id="CHEBI:15377"/>
        <dbReference type="ChEBI" id="CHEBI:15378"/>
        <dbReference type="ChEBI" id="CHEBI:15740"/>
        <dbReference type="ChEBI" id="CHEBI:37565"/>
        <dbReference type="ChEBI" id="CHEBI:58462"/>
        <dbReference type="EC" id="3.5.4.16"/>
    </reaction>
</comment>
<comment type="pathway">
    <text>Cofactor biosynthesis; 7,8-dihydroneopterin triphosphate biosynthesis; 7,8-dihydroneopterin triphosphate from GTP: step 1/1.</text>
</comment>
<comment type="subunit">
    <text evidence="1">Toroid-shaped homodecamer, composed of two pentamers of five dimers.</text>
</comment>
<comment type="similarity">
    <text evidence="2">Belongs to the GTP cyclohydrolase I family.</text>
</comment>
<reference key="1">
    <citation type="journal article" date="1998" name="Nature">
        <title>The complete genome of the hyperthermophilic bacterium Aquifex aeolicus.</title>
        <authorList>
            <person name="Deckert G."/>
            <person name="Warren P.V."/>
            <person name="Gaasterland T."/>
            <person name="Young W.G."/>
            <person name="Lenox A.L."/>
            <person name="Graham D.E."/>
            <person name="Overbeek R."/>
            <person name="Snead M.A."/>
            <person name="Keller M."/>
            <person name="Aujay M."/>
            <person name="Huber R."/>
            <person name="Feldman R.A."/>
            <person name="Short J.M."/>
            <person name="Olsen G.J."/>
            <person name="Swanson R.V."/>
        </authorList>
    </citation>
    <scope>NUCLEOTIDE SEQUENCE [LARGE SCALE GENOMIC DNA]</scope>
    <source>
        <strain>VF5</strain>
    </source>
</reference>
<proteinExistence type="inferred from homology"/>
<evidence type="ECO:0000250" key="1"/>
<evidence type="ECO:0000305" key="2"/>
<sequence length="184" mass="21285">MAIDKEKIKQAVRLFLEGIGEDPDREGLKETPERVARMWEEFERMRNFDMKLFEEFGGYNEMVLVKDIKFYSLCEHHLLPFFGKVHIAYIPDKKISGLSKLVRTVRAFALRPQVQERLTEEIADFLEKELEPKGVGVVIEAEHLCMSMRGVMSPGHLTVTSALRGVFLKDIKTREEFLKLVKGV</sequence>
<feature type="chain" id="PRO_0000119381" description="GTP cyclohydrolase 1">
    <location>
        <begin position="1"/>
        <end position="184"/>
    </location>
</feature>
<feature type="binding site" evidence="1">
    <location>
        <position position="74"/>
    </location>
    <ligand>
        <name>Zn(2+)</name>
        <dbReference type="ChEBI" id="CHEBI:29105"/>
    </ligand>
</feature>
<feature type="binding site" evidence="1">
    <location>
        <position position="77"/>
    </location>
    <ligand>
        <name>Zn(2+)</name>
        <dbReference type="ChEBI" id="CHEBI:29105"/>
    </ligand>
</feature>
<feature type="binding site" evidence="1">
    <location>
        <position position="145"/>
    </location>
    <ligand>
        <name>Zn(2+)</name>
        <dbReference type="ChEBI" id="CHEBI:29105"/>
    </ligand>
</feature>